<evidence type="ECO:0000250" key="1"/>
<evidence type="ECO:0000255" key="2">
    <source>
        <dbReference type="HAMAP-Rule" id="MF_01728"/>
    </source>
</evidence>
<proteinExistence type="inferred from homology"/>
<accession>P0A2V0</accession>
<accession>P18768</accession>
<name>NDVA_AGRFC</name>
<sequence>MTLFQVYTRALRYLTVHKWRVAVVVIANVILAAITIAEPVLFGRIIDAISSGTNVTPILILWAGFGVFNTVAYVAVAREADRLAHGRRATLLTEAFGRIISMPLSWHHLRGTSNALHTLLRASETLFGLWLEFMRTHLATFVALVLLIPTAMAMDLRLSFVLIGLGIVYWFIGKWVMGRTKDGQASVEEHYHSVFAHVSDSISNVSVLHSYNRIEAETKALKSFTEKLLSAQYPVLDWWAFASALNRTASTVSMMIILVIGTVLVKNGELRVGDVIAFIGFANLLIGRLDQMRQFVTQIFEARAKLEDFFVLEDAVKEREEPGDARELSNVSGTVEFRNINFGFANTKQGVHDVSFTAKAGETVAIVGPTGAGKTTLINLLQRVYDPDSGQILIDGTDISTVTKNSLRNSIATVFQDAGLLNRSIRENIRLGRETATDAEVVEAAAAAAATDFIDSRINGYLTQVGERGNRLSGGERQRIAIARAILKNAPILVLDEATSALDVETEARVKAAVDALRKNRTTFIIAHRLSTVRDADLVLFLDQGRIIEKGTFDELTQRGGRFTSLLRTSGLLTEDEGQQPRPKAIAS</sequence>
<gene>
    <name evidence="2" type="primary">ndvA</name>
    <name type="synonym">chvA</name>
    <name type="ordered locus">Atu2728</name>
    <name type="ORF">AGR_C_4944</name>
</gene>
<reference key="1">
    <citation type="journal article" date="2001" name="Science">
        <title>The genome of the natural genetic engineer Agrobacterium tumefaciens C58.</title>
        <authorList>
            <person name="Wood D.W."/>
            <person name="Setubal J.C."/>
            <person name="Kaul R."/>
            <person name="Monks D.E."/>
            <person name="Kitajima J.P."/>
            <person name="Okura V.K."/>
            <person name="Zhou Y."/>
            <person name="Chen L."/>
            <person name="Wood G.E."/>
            <person name="Almeida N.F. Jr."/>
            <person name="Woo L."/>
            <person name="Chen Y."/>
            <person name="Paulsen I.T."/>
            <person name="Eisen J.A."/>
            <person name="Karp P.D."/>
            <person name="Bovee D. Sr."/>
            <person name="Chapman P."/>
            <person name="Clendenning J."/>
            <person name="Deatherage G."/>
            <person name="Gillet W."/>
            <person name="Grant C."/>
            <person name="Kutyavin T."/>
            <person name="Levy R."/>
            <person name="Li M.-J."/>
            <person name="McClelland E."/>
            <person name="Palmieri A."/>
            <person name="Raymond C."/>
            <person name="Rouse G."/>
            <person name="Saenphimmachak C."/>
            <person name="Wu Z."/>
            <person name="Romero P."/>
            <person name="Gordon D."/>
            <person name="Zhang S."/>
            <person name="Yoo H."/>
            <person name="Tao Y."/>
            <person name="Biddle P."/>
            <person name="Jung M."/>
            <person name="Krespan W."/>
            <person name="Perry M."/>
            <person name="Gordon-Kamm B."/>
            <person name="Liao L."/>
            <person name="Kim S."/>
            <person name="Hendrick C."/>
            <person name="Zhao Z.-Y."/>
            <person name="Dolan M."/>
            <person name="Chumley F."/>
            <person name="Tingey S.V."/>
            <person name="Tomb J.-F."/>
            <person name="Gordon M.P."/>
            <person name="Olson M.V."/>
            <person name="Nester E.W."/>
        </authorList>
    </citation>
    <scope>NUCLEOTIDE SEQUENCE [LARGE SCALE GENOMIC DNA]</scope>
    <source>
        <strain>C58 / ATCC 33970</strain>
    </source>
</reference>
<reference key="2">
    <citation type="journal article" date="2001" name="Science">
        <title>Genome sequence of the plant pathogen and biotechnology agent Agrobacterium tumefaciens C58.</title>
        <authorList>
            <person name="Goodner B."/>
            <person name="Hinkle G."/>
            <person name="Gattung S."/>
            <person name="Miller N."/>
            <person name="Blanchard M."/>
            <person name="Qurollo B."/>
            <person name="Goldman B.S."/>
            <person name="Cao Y."/>
            <person name="Askenazi M."/>
            <person name="Halling C."/>
            <person name="Mullin L."/>
            <person name="Houmiel K."/>
            <person name="Gordon J."/>
            <person name="Vaudin M."/>
            <person name="Iartchouk O."/>
            <person name="Epp A."/>
            <person name="Liu F."/>
            <person name="Wollam C."/>
            <person name="Allinger M."/>
            <person name="Doughty D."/>
            <person name="Scott C."/>
            <person name="Lappas C."/>
            <person name="Markelz B."/>
            <person name="Flanagan C."/>
            <person name="Crowell C."/>
            <person name="Gurson J."/>
            <person name="Lomo C."/>
            <person name="Sear C."/>
            <person name="Strub G."/>
            <person name="Cielo C."/>
            <person name="Slater S."/>
        </authorList>
    </citation>
    <scope>NUCLEOTIDE SEQUENCE [LARGE SCALE GENOMIC DNA]</scope>
    <source>
        <strain>C58 / ATCC 33970</strain>
    </source>
</reference>
<feature type="chain" id="PRO_0000092231" description="Beta-(1--&gt;2)glucan export ATP-binding/permease protein NdvA">
    <location>
        <begin position="1"/>
        <end position="588"/>
    </location>
</feature>
<feature type="transmembrane region" description="Helical" evidence="2">
    <location>
        <begin position="22"/>
        <end position="42"/>
    </location>
</feature>
<feature type="transmembrane region" description="Helical" evidence="2">
    <location>
        <begin position="57"/>
        <end position="77"/>
    </location>
</feature>
<feature type="transmembrane region" description="Helical" evidence="2">
    <location>
        <begin position="136"/>
        <end position="156"/>
    </location>
</feature>
<feature type="transmembrane region" description="Helical" evidence="2">
    <location>
        <begin position="158"/>
        <end position="178"/>
    </location>
</feature>
<feature type="transmembrane region" description="Helical" evidence="2">
    <location>
        <begin position="248"/>
        <end position="268"/>
    </location>
</feature>
<feature type="transmembrane region" description="Helical" evidence="2">
    <location>
        <begin position="272"/>
        <end position="292"/>
    </location>
</feature>
<feature type="domain" description="ABC transmembrane type-1" evidence="2">
    <location>
        <begin position="21"/>
        <end position="301"/>
    </location>
</feature>
<feature type="domain" description="ABC transporter" evidence="2">
    <location>
        <begin position="335"/>
        <end position="569"/>
    </location>
</feature>
<feature type="binding site" evidence="2">
    <location>
        <begin position="368"/>
        <end position="375"/>
    </location>
    <ligand>
        <name>ATP</name>
        <dbReference type="ChEBI" id="CHEBI:30616"/>
    </ligand>
</feature>
<comment type="function">
    <text evidence="1">Involved in beta-(1--&gt;2)glucan export which is required for crown gall tumor formation. Transmembrane domains (TMD) form a pore in the inner membrane and the ATP-binding domain (NBD) is responsible for energy generation (By similarity).</text>
</comment>
<comment type="catalytic activity">
    <reaction evidence="2">
        <text>[(1-&gt;2)-beta-D-glucosyl](n)(in) + ATP + H2O = [(1-&gt;2)-beta-D-glucosyl](n)(out) + ADP + phosphate + H(+)</text>
        <dbReference type="Rhea" id="RHEA:18453"/>
        <dbReference type="Rhea" id="RHEA-COMP:11881"/>
        <dbReference type="ChEBI" id="CHEBI:15377"/>
        <dbReference type="ChEBI" id="CHEBI:15378"/>
        <dbReference type="ChEBI" id="CHEBI:27517"/>
        <dbReference type="ChEBI" id="CHEBI:30616"/>
        <dbReference type="ChEBI" id="CHEBI:43474"/>
        <dbReference type="ChEBI" id="CHEBI:456216"/>
        <dbReference type="EC" id="7.5.2.3"/>
    </reaction>
</comment>
<comment type="subunit">
    <text evidence="2">Homodimer.</text>
</comment>
<comment type="subcellular location">
    <subcellularLocation>
        <location evidence="2">Cell inner membrane</location>
        <topology evidence="2">Multi-pass membrane protein</topology>
    </subcellularLocation>
</comment>
<comment type="domain">
    <text>In NdvA the ATP-binding domain (NBD) and the transmembrane domain (TMD) are fused.</text>
</comment>
<comment type="similarity">
    <text evidence="2">Belongs to the ABC transporter superfamily. Beta-(1--&gt;2)glucan exporter (TC 3.A.1.108.1) family.</text>
</comment>
<keyword id="KW-0067">ATP-binding</keyword>
<keyword id="KW-0997">Cell inner membrane</keyword>
<keyword id="KW-1003">Cell membrane</keyword>
<keyword id="KW-0472">Membrane</keyword>
<keyword id="KW-0547">Nucleotide-binding</keyword>
<keyword id="KW-1185">Reference proteome</keyword>
<keyword id="KW-0762">Sugar transport</keyword>
<keyword id="KW-1278">Translocase</keyword>
<keyword id="KW-0812">Transmembrane</keyword>
<keyword id="KW-1133">Transmembrane helix</keyword>
<keyword id="KW-0813">Transport</keyword>
<organism>
    <name type="scientific">Agrobacterium fabrum (strain C58 / ATCC 33970)</name>
    <name type="common">Agrobacterium tumefaciens (strain C58)</name>
    <dbReference type="NCBI Taxonomy" id="176299"/>
    <lineage>
        <taxon>Bacteria</taxon>
        <taxon>Pseudomonadati</taxon>
        <taxon>Pseudomonadota</taxon>
        <taxon>Alphaproteobacteria</taxon>
        <taxon>Hyphomicrobiales</taxon>
        <taxon>Rhizobiaceae</taxon>
        <taxon>Rhizobium/Agrobacterium group</taxon>
        <taxon>Agrobacterium</taxon>
        <taxon>Agrobacterium tumefaciens complex</taxon>
    </lineage>
</organism>
<protein>
    <recommendedName>
        <fullName evidence="2">Beta-(1--&gt;2)glucan export ATP-binding/permease protein NdvA</fullName>
        <ecNumber evidence="2">7.5.2.3</ecNumber>
    </recommendedName>
    <alternativeName>
        <fullName>Attachment protein</fullName>
    </alternativeName>
</protein>
<dbReference type="EC" id="7.5.2.3" evidence="2"/>
<dbReference type="EMBL" id="AE007869">
    <property type="protein sequence ID" value="AAK88446.2"/>
    <property type="molecule type" value="Genomic_DNA"/>
</dbReference>
<dbReference type="PIR" id="AG2911">
    <property type="entry name" value="AG2911"/>
</dbReference>
<dbReference type="PIR" id="E97686">
    <property type="entry name" value="E97686"/>
</dbReference>
<dbReference type="RefSeq" id="NP_355661.2">
    <property type="nucleotide sequence ID" value="NC_003062.2"/>
</dbReference>
<dbReference type="RefSeq" id="WP_010972522.1">
    <property type="nucleotide sequence ID" value="NC_003062.2"/>
</dbReference>
<dbReference type="SMR" id="P0A2V0"/>
<dbReference type="STRING" id="176299.Atu2728"/>
<dbReference type="EnsemblBacteria" id="AAK88446">
    <property type="protein sequence ID" value="AAK88446"/>
    <property type="gene ID" value="Atu2728"/>
</dbReference>
<dbReference type="GeneID" id="1134766"/>
<dbReference type="KEGG" id="atu:Atu2728"/>
<dbReference type="PATRIC" id="fig|176299.10.peg.2736"/>
<dbReference type="eggNOG" id="COG1132">
    <property type="taxonomic scope" value="Bacteria"/>
</dbReference>
<dbReference type="HOGENOM" id="CLU_000604_84_8_5"/>
<dbReference type="OrthoDB" id="9804259at2"/>
<dbReference type="PhylomeDB" id="P0A2V0"/>
<dbReference type="Proteomes" id="UP000000813">
    <property type="component" value="Chromosome circular"/>
</dbReference>
<dbReference type="GO" id="GO:0005886">
    <property type="term" value="C:plasma membrane"/>
    <property type="evidence" value="ECO:0007669"/>
    <property type="project" value="UniProtKB-SubCell"/>
</dbReference>
<dbReference type="GO" id="GO:0015441">
    <property type="term" value="F:ABC-type beta-glucan transporter activity"/>
    <property type="evidence" value="ECO:0007669"/>
    <property type="project" value="UniProtKB-EC"/>
</dbReference>
<dbReference type="GO" id="GO:0015421">
    <property type="term" value="F:ABC-type oligopeptide transporter activity"/>
    <property type="evidence" value="ECO:0007669"/>
    <property type="project" value="TreeGrafter"/>
</dbReference>
<dbReference type="GO" id="GO:0005524">
    <property type="term" value="F:ATP binding"/>
    <property type="evidence" value="ECO:0007669"/>
    <property type="project" value="UniProtKB-KW"/>
</dbReference>
<dbReference type="GO" id="GO:0016887">
    <property type="term" value="F:ATP hydrolysis activity"/>
    <property type="evidence" value="ECO:0007669"/>
    <property type="project" value="InterPro"/>
</dbReference>
<dbReference type="CDD" id="cd18562">
    <property type="entry name" value="ABC_6TM_NdvA_beta-glucan_exporter_like"/>
    <property type="match status" value="1"/>
</dbReference>
<dbReference type="CDD" id="cd03254">
    <property type="entry name" value="ABCC_Glucan_exporter_like"/>
    <property type="match status" value="1"/>
</dbReference>
<dbReference type="FunFam" id="3.40.50.300:FF:000221">
    <property type="entry name" value="Multidrug ABC transporter ATP-binding protein"/>
    <property type="match status" value="1"/>
</dbReference>
<dbReference type="Gene3D" id="1.20.1560.10">
    <property type="entry name" value="ABC transporter type 1, transmembrane domain"/>
    <property type="match status" value="1"/>
</dbReference>
<dbReference type="Gene3D" id="3.40.50.300">
    <property type="entry name" value="P-loop containing nucleotide triphosphate hydrolases"/>
    <property type="match status" value="1"/>
</dbReference>
<dbReference type="InterPro" id="IPR003593">
    <property type="entry name" value="AAA+_ATPase"/>
</dbReference>
<dbReference type="InterPro" id="IPR011527">
    <property type="entry name" value="ABC1_TM_dom"/>
</dbReference>
<dbReference type="InterPro" id="IPR036640">
    <property type="entry name" value="ABC1_TM_sf"/>
</dbReference>
<dbReference type="InterPro" id="IPR003439">
    <property type="entry name" value="ABC_transporter-like_ATP-bd"/>
</dbReference>
<dbReference type="InterPro" id="IPR017871">
    <property type="entry name" value="ABC_transporter-like_CS"/>
</dbReference>
<dbReference type="InterPro" id="IPR005896">
    <property type="entry name" value="NdvA"/>
</dbReference>
<dbReference type="InterPro" id="IPR027417">
    <property type="entry name" value="P-loop_NTPase"/>
</dbReference>
<dbReference type="InterPro" id="IPR039421">
    <property type="entry name" value="Type_1_exporter"/>
</dbReference>
<dbReference type="NCBIfam" id="TIGR01192">
    <property type="entry name" value="chvA"/>
    <property type="match status" value="1"/>
</dbReference>
<dbReference type="NCBIfam" id="NF010178">
    <property type="entry name" value="PRK13657.1"/>
    <property type="match status" value="1"/>
</dbReference>
<dbReference type="PANTHER" id="PTHR43394:SF1">
    <property type="entry name" value="ATP-BINDING CASSETTE SUB-FAMILY B MEMBER 10, MITOCHONDRIAL"/>
    <property type="match status" value="1"/>
</dbReference>
<dbReference type="PANTHER" id="PTHR43394">
    <property type="entry name" value="ATP-DEPENDENT PERMEASE MDL1, MITOCHONDRIAL"/>
    <property type="match status" value="1"/>
</dbReference>
<dbReference type="Pfam" id="PF00664">
    <property type="entry name" value="ABC_membrane"/>
    <property type="match status" value="1"/>
</dbReference>
<dbReference type="Pfam" id="PF00005">
    <property type="entry name" value="ABC_tran"/>
    <property type="match status" value="1"/>
</dbReference>
<dbReference type="SMART" id="SM00382">
    <property type="entry name" value="AAA"/>
    <property type="match status" value="1"/>
</dbReference>
<dbReference type="SUPFAM" id="SSF90123">
    <property type="entry name" value="ABC transporter transmembrane region"/>
    <property type="match status" value="1"/>
</dbReference>
<dbReference type="SUPFAM" id="SSF52540">
    <property type="entry name" value="P-loop containing nucleoside triphosphate hydrolases"/>
    <property type="match status" value="1"/>
</dbReference>
<dbReference type="PROSITE" id="PS50929">
    <property type="entry name" value="ABC_TM1F"/>
    <property type="match status" value="1"/>
</dbReference>
<dbReference type="PROSITE" id="PS00211">
    <property type="entry name" value="ABC_TRANSPORTER_1"/>
    <property type="match status" value="1"/>
</dbReference>
<dbReference type="PROSITE" id="PS50893">
    <property type="entry name" value="ABC_TRANSPORTER_2"/>
    <property type="match status" value="1"/>
</dbReference>
<dbReference type="PROSITE" id="PS51317">
    <property type="entry name" value="NDVA"/>
    <property type="match status" value="1"/>
</dbReference>